<feature type="chain" id="PRO_0000405064" description="Nuclear distribution protein PAC1">
    <location>
        <begin position="1"/>
        <end position="461"/>
    </location>
</feature>
<feature type="domain" description="LisH" evidence="1">
    <location>
        <begin position="9"/>
        <end position="41"/>
    </location>
</feature>
<feature type="repeat" description="WD 1">
    <location>
        <begin position="114"/>
        <end position="155"/>
    </location>
</feature>
<feature type="repeat" description="WD 2">
    <location>
        <begin position="157"/>
        <end position="197"/>
    </location>
</feature>
<feature type="repeat" description="WD 3">
    <location>
        <begin position="201"/>
        <end position="248"/>
    </location>
</feature>
<feature type="repeat" description="WD 4">
    <location>
        <begin position="251"/>
        <end position="290"/>
    </location>
</feature>
<feature type="repeat" description="WD 5">
    <location>
        <begin position="312"/>
        <end position="355"/>
    </location>
</feature>
<feature type="repeat" description="WD 6">
    <location>
        <begin position="357"/>
        <end position="396"/>
    </location>
</feature>
<feature type="repeat" description="WD 7">
    <location>
        <begin position="401"/>
        <end position="446"/>
    </location>
</feature>
<feature type="repeat" description="WD 8">
    <location>
        <begin position="448"/>
        <end position="461"/>
    </location>
</feature>
<feature type="coiled-coil region" evidence="1">
    <location>
        <begin position="61"/>
        <end position="88"/>
    </location>
</feature>
<proteinExistence type="inferred from homology"/>
<sequence length="461" mass="50793">MSPILTNRQAEELHKSIIAYLTANNLLDTANTLRAELNLNEDAFDPATAKKYETLLEKKWTSVVRLQKKIMDLESRMSAMQAELDNATPTSLSKRNKDPASWIPTAPARHALESHRDTINSVAFHPIFSSVASASDDCTIKIWDWELGELERTIKGHTRAVVDVDFGGPRGGILLASCSSDLSIKLWDPSNEYKNIRTLVGHDHSVSAVRFIPLGASGAPSSGNLLASASRDKSLKIWDANTGYCLRTLQGHTAWVRDVFPSPDGRFLLSTGDDSTARLWDISVSNPETKVTMFGHDHFNECCAIAPSTSYQYLSPLTGLKKPPPASSTAEFMATGSRDKKIKIWDARGTCLLTLAGHDNWIRALAFHPGGKYLFSVSDDRTLRCWDLSQEGKCIKVMRDAHERFITCLRWAPSIFKDAPTGNGASDGKNGDIKKSDSPEVQIRCVIATGGVDMKLRIFAN</sequence>
<name>LIS1_ARTBC</name>
<dbReference type="EMBL" id="ABSU01000020">
    <property type="protein sequence ID" value="EFE31570.1"/>
    <property type="molecule type" value="Genomic_DNA"/>
</dbReference>
<dbReference type="RefSeq" id="XP_003012210.1">
    <property type="nucleotide sequence ID" value="XM_003012164.1"/>
</dbReference>
<dbReference type="SMR" id="D4AZ50"/>
<dbReference type="STRING" id="663331.D4AZ50"/>
<dbReference type="GeneID" id="9519778"/>
<dbReference type="KEGG" id="abe:ARB_01470"/>
<dbReference type="eggNOG" id="KOG0295">
    <property type="taxonomic scope" value="Eukaryota"/>
</dbReference>
<dbReference type="HOGENOM" id="CLU_000288_57_15_1"/>
<dbReference type="OMA" id="RGTCLMT"/>
<dbReference type="OrthoDB" id="10264588at2759"/>
<dbReference type="Proteomes" id="UP000008866">
    <property type="component" value="Unassembled WGS sequence"/>
</dbReference>
<dbReference type="GO" id="GO:0005737">
    <property type="term" value="C:cytoplasm"/>
    <property type="evidence" value="ECO:0007669"/>
    <property type="project" value="UniProtKB-UniRule"/>
</dbReference>
<dbReference type="GO" id="GO:0005874">
    <property type="term" value="C:microtubule"/>
    <property type="evidence" value="ECO:0007669"/>
    <property type="project" value="UniProtKB-KW"/>
</dbReference>
<dbReference type="GO" id="GO:0005875">
    <property type="term" value="C:microtubule associated complex"/>
    <property type="evidence" value="ECO:0007669"/>
    <property type="project" value="UniProtKB-UniRule"/>
</dbReference>
<dbReference type="GO" id="GO:0000922">
    <property type="term" value="C:spindle pole"/>
    <property type="evidence" value="ECO:0007669"/>
    <property type="project" value="UniProtKB-SubCell"/>
</dbReference>
<dbReference type="GO" id="GO:1990234">
    <property type="term" value="C:transferase complex"/>
    <property type="evidence" value="ECO:0007669"/>
    <property type="project" value="UniProtKB-ARBA"/>
</dbReference>
<dbReference type="GO" id="GO:0070840">
    <property type="term" value="F:dynein complex binding"/>
    <property type="evidence" value="ECO:0007669"/>
    <property type="project" value="UniProtKB-UniRule"/>
</dbReference>
<dbReference type="GO" id="GO:0051301">
    <property type="term" value="P:cell division"/>
    <property type="evidence" value="ECO:0007669"/>
    <property type="project" value="UniProtKB-KW"/>
</dbReference>
<dbReference type="GO" id="GO:0000132">
    <property type="term" value="P:establishment of mitotic spindle orientation"/>
    <property type="evidence" value="ECO:0007669"/>
    <property type="project" value="UniProtKB-UniRule"/>
</dbReference>
<dbReference type="GO" id="GO:0051012">
    <property type="term" value="P:microtubule sliding"/>
    <property type="evidence" value="ECO:0007669"/>
    <property type="project" value="UniProtKB-UniRule"/>
</dbReference>
<dbReference type="CDD" id="cd00200">
    <property type="entry name" value="WD40"/>
    <property type="match status" value="1"/>
</dbReference>
<dbReference type="FunFam" id="2.130.10.10:FF:000342">
    <property type="entry name" value="Nuclear distribution protein PAC1"/>
    <property type="match status" value="1"/>
</dbReference>
<dbReference type="FunFam" id="1.20.960.30:FF:000002">
    <property type="entry name" value="Platelet-activating factor acetylhydrolase ib"/>
    <property type="match status" value="1"/>
</dbReference>
<dbReference type="Gene3D" id="1.20.960.30">
    <property type="match status" value="1"/>
</dbReference>
<dbReference type="Gene3D" id="2.130.10.10">
    <property type="entry name" value="YVTN repeat-like/Quinoprotein amine dehydrogenase"/>
    <property type="match status" value="1"/>
</dbReference>
<dbReference type="HAMAP" id="MF_03141">
    <property type="entry name" value="lis1"/>
    <property type="match status" value="1"/>
</dbReference>
<dbReference type="InterPro" id="IPR017252">
    <property type="entry name" value="Dynein_regulator_LIS1"/>
</dbReference>
<dbReference type="InterPro" id="IPR020472">
    <property type="entry name" value="G-protein_beta_WD-40_rep"/>
</dbReference>
<dbReference type="InterPro" id="IPR037190">
    <property type="entry name" value="LIS1_N"/>
</dbReference>
<dbReference type="InterPro" id="IPR006594">
    <property type="entry name" value="LisH"/>
</dbReference>
<dbReference type="InterPro" id="IPR056795">
    <property type="entry name" value="PAC1-like_LisH-like_dom"/>
</dbReference>
<dbReference type="InterPro" id="IPR015943">
    <property type="entry name" value="WD40/YVTN_repeat-like_dom_sf"/>
</dbReference>
<dbReference type="InterPro" id="IPR019775">
    <property type="entry name" value="WD40_repeat_CS"/>
</dbReference>
<dbReference type="InterPro" id="IPR036322">
    <property type="entry name" value="WD40_repeat_dom_sf"/>
</dbReference>
<dbReference type="InterPro" id="IPR001680">
    <property type="entry name" value="WD40_rpt"/>
</dbReference>
<dbReference type="PANTHER" id="PTHR22847:SF637">
    <property type="entry name" value="WD REPEAT DOMAIN 5B"/>
    <property type="match status" value="1"/>
</dbReference>
<dbReference type="PANTHER" id="PTHR22847">
    <property type="entry name" value="WD40 REPEAT PROTEIN"/>
    <property type="match status" value="1"/>
</dbReference>
<dbReference type="Pfam" id="PF24951">
    <property type="entry name" value="LisH_PAC1"/>
    <property type="match status" value="1"/>
</dbReference>
<dbReference type="Pfam" id="PF00400">
    <property type="entry name" value="WD40"/>
    <property type="match status" value="6"/>
</dbReference>
<dbReference type="PIRSF" id="PIRSF037647">
    <property type="entry name" value="Dynein_regulator_Lis1"/>
    <property type="match status" value="1"/>
</dbReference>
<dbReference type="PRINTS" id="PR00320">
    <property type="entry name" value="GPROTEINBRPT"/>
</dbReference>
<dbReference type="SMART" id="SM00320">
    <property type="entry name" value="WD40"/>
    <property type="match status" value="7"/>
</dbReference>
<dbReference type="SUPFAM" id="SSF109925">
    <property type="entry name" value="Lissencephaly-1 protein (Lis-1, PAF-AH alpha) N-terminal domain"/>
    <property type="match status" value="1"/>
</dbReference>
<dbReference type="SUPFAM" id="SSF50978">
    <property type="entry name" value="WD40 repeat-like"/>
    <property type="match status" value="1"/>
</dbReference>
<dbReference type="PROSITE" id="PS50896">
    <property type="entry name" value="LISH"/>
    <property type="match status" value="1"/>
</dbReference>
<dbReference type="PROSITE" id="PS00678">
    <property type="entry name" value="WD_REPEATS_1"/>
    <property type="match status" value="3"/>
</dbReference>
<dbReference type="PROSITE" id="PS50082">
    <property type="entry name" value="WD_REPEATS_2"/>
    <property type="match status" value="6"/>
</dbReference>
<dbReference type="PROSITE" id="PS50294">
    <property type="entry name" value="WD_REPEATS_REGION"/>
    <property type="match status" value="1"/>
</dbReference>
<gene>
    <name evidence="1" type="primary">PAC1</name>
    <name evidence="1" type="synonym">LIS1</name>
    <name type="ORF">ARB_01470</name>
</gene>
<organism>
    <name type="scientific">Arthroderma benhamiae (strain ATCC MYA-4681 / CBS 112371)</name>
    <name type="common">Trichophyton mentagrophytes</name>
    <dbReference type="NCBI Taxonomy" id="663331"/>
    <lineage>
        <taxon>Eukaryota</taxon>
        <taxon>Fungi</taxon>
        <taxon>Dikarya</taxon>
        <taxon>Ascomycota</taxon>
        <taxon>Pezizomycotina</taxon>
        <taxon>Eurotiomycetes</taxon>
        <taxon>Eurotiomycetidae</taxon>
        <taxon>Onygenales</taxon>
        <taxon>Arthrodermataceae</taxon>
        <taxon>Trichophyton</taxon>
    </lineage>
</organism>
<comment type="function">
    <text evidence="1">Positively regulates the activity of the minus-end directed microtubule motor protein dynein. May enhance dynein-mediated microtubule sliding by targeting dynein to the microtubule plus end. Required for nuclear migration during vegetative growth as well as development. Required for retrograde early endosome (EE) transport from the hyphal tip. Required for localization of dynein to the mitotic spindle poles. Recruits additional proteins to the dynein complex at SPBs.</text>
</comment>
<comment type="subunit">
    <text evidence="1">Self-associates. Interacts with NDL1 and dynein.</text>
</comment>
<comment type="subcellular location">
    <subcellularLocation>
        <location evidence="1">Cytoplasm</location>
        <location evidence="1">Cytoskeleton</location>
    </subcellularLocation>
    <subcellularLocation>
        <location evidence="1">Cytoplasm</location>
        <location evidence="1">Cytoskeleton</location>
        <location evidence="1">Spindle pole</location>
    </subcellularLocation>
    <text evidence="1">Localizes to the plus ends of microtubules at the hyphal tip and the mitotic spindle poles.</text>
</comment>
<comment type="domain">
    <text evidence="1">Dimerization mediated by the LisH domain may be required to activate dynein.</text>
</comment>
<comment type="similarity">
    <text evidence="1">Belongs to the WD repeat LIS1/nudF family.</text>
</comment>
<accession>D4AZ50</accession>
<reference key="1">
    <citation type="journal article" date="2011" name="Genome Biol.">
        <title>Comparative and functional genomics provide insights into the pathogenicity of dermatophytic fungi.</title>
        <authorList>
            <person name="Burmester A."/>
            <person name="Shelest E."/>
            <person name="Gloeckner G."/>
            <person name="Heddergott C."/>
            <person name="Schindler S."/>
            <person name="Staib P."/>
            <person name="Heidel A."/>
            <person name="Felder M."/>
            <person name="Petzold A."/>
            <person name="Szafranski K."/>
            <person name="Feuermann M."/>
            <person name="Pedruzzi I."/>
            <person name="Priebe S."/>
            <person name="Groth M."/>
            <person name="Winkler R."/>
            <person name="Li W."/>
            <person name="Kniemeyer O."/>
            <person name="Schroeckh V."/>
            <person name="Hertweck C."/>
            <person name="Hube B."/>
            <person name="White T.C."/>
            <person name="Platzer M."/>
            <person name="Guthke R."/>
            <person name="Heitman J."/>
            <person name="Woestemeyer J."/>
            <person name="Zipfel P.F."/>
            <person name="Monod M."/>
            <person name="Brakhage A.A."/>
        </authorList>
    </citation>
    <scope>NUCLEOTIDE SEQUENCE [LARGE SCALE GENOMIC DNA]</scope>
    <source>
        <strain>ATCC MYA-4681 / CBS 112371</strain>
    </source>
</reference>
<evidence type="ECO:0000255" key="1">
    <source>
        <dbReference type="HAMAP-Rule" id="MF_03141"/>
    </source>
</evidence>
<protein>
    <recommendedName>
        <fullName evidence="1">Nuclear distribution protein PAC1</fullName>
    </recommendedName>
    <alternativeName>
        <fullName evidence="1">Lissencephaly-1 homolog</fullName>
        <shortName evidence="1">LIS-1</shortName>
    </alternativeName>
    <alternativeName>
        <fullName evidence="1">nudF homolog</fullName>
    </alternativeName>
</protein>
<keyword id="KW-0131">Cell cycle</keyword>
<keyword id="KW-0132">Cell division</keyword>
<keyword id="KW-0175">Coiled coil</keyword>
<keyword id="KW-0963">Cytoplasm</keyword>
<keyword id="KW-0206">Cytoskeleton</keyword>
<keyword id="KW-0493">Microtubule</keyword>
<keyword id="KW-0498">Mitosis</keyword>
<keyword id="KW-1185">Reference proteome</keyword>
<keyword id="KW-0677">Repeat</keyword>
<keyword id="KW-0813">Transport</keyword>
<keyword id="KW-0853">WD repeat</keyword>